<organism>
    <name type="scientific">Arabidopsis thaliana</name>
    <name type="common">Mouse-ear cress</name>
    <dbReference type="NCBI Taxonomy" id="3702"/>
    <lineage>
        <taxon>Eukaryota</taxon>
        <taxon>Viridiplantae</taxon>
        <taxon>Streptophyta</taxon>
        <taxon>Embryophyta</taxon>
        <taxon>Tracheophyta</taxon>
        <taxon>Spermatophyta</taxon>
        <taxon>Magnoliopsida</taxon>
        <taxon>eudicotyledons</taxon>
        <taxon>Gunneridae</taxon>
        <taxon>Pentapetalae</taxon>
        <taxon>rosids</taxon>
        <taxon>malvids</taxon>
        <taxon>Brassicales</taxon>
        <taxon>Brassicaceae</taxon>
        <taxon>Camelineae</taxon>
        <taxon>Arabidopsis</taxon>
    </lineage>
</organism>
<comment type="function">
    <text evidence="1">May regulate flowering time by modulating the photoperiod pathway.</text>
</comment>
<comment type="catalytic activity">
    <reaction>
        <text>L-seryl-[protein] + ATP = O-phospho-L-seryl-[protein] + ADP + H(+)</text>
        <dbReference type="Rhea" id="RHEA:17989"/>
        <dbReference type="Rhea" id="RHEA-COMP:9863"/>
        <dbReference type="Rhea" id="RHEA-COMP:11604"/>
        <dbReference type="ChEBI" id="CHEBI:15378"/>
        <dbReference type="ChEBI" id="CHEBI:29999"/>
        <dbReference type="ChEBI" id="CHEBI:30616"/>
        <dbReference type="ChEBI" id="CHEBI:83421"/>
        <dbReference type="ChEBI" id="CHEBI:456216"/>
        <dbReference type="EC" id="2.7.11.1"/>
    </reaction>
</comment>
<comment type="catalytic activity">
    <reaction>
        <text>L-threonyl-[protein] + ATP = O-phospho-L-threonyl-[protein] + ADP + H(+)</text>
        <dbReference type="Rhea" id="RHEA:46608"/>
        <dbReference type="Rhea" id="RHEA-COMP:11060"/>
        <dbReference type="Rhea" id="RHEA-COMP:11605"/>
        <dbReference type="ChEBI" id="CHEBI:15378"/>
        <dbReference type="ChEBI" id="CHEBI:30013"/>
        <dbReference type="ChEBI" id="CHEBI:30616"/>
        <dbReference type="ChEBI" id="CHEBI:61977"/>
        <dbReference type="ChEBI" id="CHEBI:456216"/>
        <dbReference type="EC" id="2.7.11.1"/>
    </reaction>
</comment>
<comment type="similarity">
    <text evidence="6">Belongs to the protein kinase superfamily. Ser/Thr protein kinase family. WNK subfamily.</text>
</comment>
<comment type="caution">
    <text evidence="2">Was named WNK/'with no lysine(K)' because key residues for catalysis, including the lysine involved in ATP binding, are either not conserved or differ compared to the residues described in other kinase family proteins.</text>
</comment>
<comment type="sequence caution" evidence="7">
    <conflict type="erroneous gene model prediction">
        <sequence resource="EMBL-CDS" id="AAF19679"/>
    </conflict>
    <text>The predicted gene At1g64630 has been split into 2 genes: At1g64625 and At1g64630.</text>
</comment>
<gene>
    <name type="primary">WNK10</name>
    <name type="ordered locus">At1g64630</name>
    <name type="ORF">F1N19.20</name>
</gene>
<dbReference type="EC" id="2.7.11.1"/>
<dbReference type="EMBL" id="AC009519">
    <property type="protein sequence ID" value="AAF19679.1"/>
    <property type="status" value="ALT_SEQ"/>
    <property type="molecule type" value="Genomic_DNA"/>
</dbReference>
<dbReference type="EMBL" id="CP002684">
    <property type="protein sequence ID" value="AEE34267.1"/>
    <property type="molecule type" value="Genomic_DNA"/>
</dbReference>
<dbReference type="EMBL" id="AY081307">
    <property type="protein sequence ID" value="AAL91196.1"/>
    <property type="molecule type" value="mRNA"/>
</dbReference>
<dbReference type="EMBL" id="BT010383">
    <property type="protein sequence ID" value="AAQ56826.1"/>
    <property type="molecule type" value="mRNA"/>
</dbReference>
<dbReference type="RefSeq" id="NP_176644.2">
    <property type="nucleotide sequence ID" value="NM_105138.5"/>
</dbReference>
<dbReference type="SMR" id="Q8RXE5"/>
<dbReference type="BioGRID" id="27992">
    <property type="interactions" value="1"/>
</dbReference>
<dbReference type="FunCoup" id="Q8RXE5">
    <property type="interactions" value="2168"/>
</dbReference>
<dbReference type="IntAct" id="Q8RXE5">
    <property type="interactions" value="1"/>
</dbReference>
<dbReference type="STRING" id="3702.Q8RXE5"/>
<dbReference type="PaxDb" id="3702-AT1G64630.1"/>
<dbReference type="ProteomicsDB" id="242769"/>
<dbReference type="EnsemblPlants" id="AT1G64630.1">
    <property type="protein sequence ID" value="AT1G64630.1"/>
    <property type="gene ID" value="AT1G64630"/>
</dbReference>
<dbReference type="GeneID" id="842771"/>
<dbReference type="Gramene" id="AT1G64630.1">
    <property type="protein sequence ID" value="AT1G64630.1"/>
    <property type="gene ID" value="AT1G64630"/>
</dbReference>
<dbReference type="KEGG" id="ath:AT1G64630"/>
<dbReference type="Araport" id="AT1G64630"/>
<dbReference type="TAIR" id="AT1G64630">
    <property type="gene designation" value="WNK10"/>
</dbReference>
<dbReference type="eggNOG" id="KOG0584">
    <property type="taxonomic scope" value="Eukaryota"/>
</dbReference>
<dbReference type="HOGENOM" id="CLU_000288_142_0_1"/>
<dbReference type="InParanoid" id="Q8RXE5"/>
<dbReference type="OMA" id="QHWFQEL"/>
<dbReference type="PhylomeDB" id="Q8RXE5"/>
<dbReference type="PRO" id="PR:Q8RXE5"/>
<dbReference type="Proteomes" id="UP000006548">
    <property type="component" value="Chromosome 1"/>
</dbReference>
<dbReference type="ExpressionAtlas" id="Q8RXE5">
    <property type="expression patterns" value="baseline and differential"/>
</dbReference>
<dbReference type="GO" id="GO:0005524">
    <property type="term" value="F:ATP binding"/>
    <property type="evidence" value="ECO:0007669"/>
    <property type="project" value="UniProtKB-KW"/>
</dbReference>
<dbReference type="GO" id="GO:0106310">
    <property type="term" value="F:protein serine kinase activity"/>
    <property type="evidence" value="ECO:0007669"/>
    <property type="project" value="RHEA"/>
</dbReference>
<dbReference type="GO" id="GO:0004674">
    <property type="term" value="F:protein serine/threonine kinase activity"/>
    <property type="evidence" value="ECO:0007669"/>
    <property type="project" value="UniProtKB-KW"/>
</dbReference>
<dbReference type="CDD" id="cd13983">
    <property type="entry name" value="STKc_WNK"/>
    <property type="match status" value="1"/>
</dbReference>
<dbReference type="FunFam" id="3.30.200.20:FF:000075">
    <property type="entry name" value="Probable serine/threonine-protein kinase WNK1"/>
    <property type="match status" value="1"/>
</dbReference>
<dbReference type="FunFam" id="1.10.510.10:FF:000046">
    <property type="entry name" value="probable serine/threonine-protein kinase WNK9"/>
    <property type="match status" value="1"/>
</dbReference>
<dbReference type="Gene3D" id="3.10.20.90">
    <property type="entry name" value="Phosphatidylinositol 3-kinase Catalytic Subunit, Chain A, domain 1"/>
    <property type="match status" value="1"/>
</dbReference>
<dbReference type="Gene3D" id="3.30.200.20">
    <property type="entry name" value="Phosphorylase Kinase, domain 1"/>
    <property type="match status" value="1"/>
</dbReference>
<dbReference type="Gene3D" id="1.10.510.10">
    <property type="entry name" value="Transferase(Phosphotransferase) domain 1"/>
    <property type="match status" value="1"/>
</dbReference>
<dbReference type="InterPro" id="IPR011009">
    <property type="entry name" value="Kinase-like_dom_sf"/>
</dbReference>
<dbReference type="InterPro" id="IPR000719">
    <property type="entry name" value="Prot_kinase_dom"/>
</dbReference>
<dbReference type="InterPro" id="IPR008271">
    <property type="entry name" value="Ser/Thr_kinase_AS"/>
</dbReference>
<dbReference type="InterPro" id="IPR050588">
    <property type="entry name" value="WNK_Ser-Thr_kinase"/>
</dbReference>
<dbReference type="PANTHER" id="PTHR13902">
    <property type="entry name" value="SERINE/THREONINE-PROTEIN KINASE WNK WITH NO LYSINE -RELATED"/>
    <property type="match status" value="1"/>
</dbReference>
<dbReference type="Pfam" id="PF00069">
    <property type="entry name" value="Pkinase"/>
    <property type="match status" value="1"/>
</dbReference>
<dbReference type="SMART" id="SM00220">
    <property type="entry name" value="S_TKc"/>
    <property type="match status" value="1"/>
</dbReference>
<dbReference type="SUPFAM" id="SSF56112">
    <property type="entry name" value="Protein kinase-like (PK-like)"/>
    <property type="match status" value="1"/>
</dbReference>
<dbReference type="PROSITE" id="PS50011">
    <property type="entry name" value="PROTEIN_KINASE_DOM"/>
    <property type="match status" value="1"/>
</dbReference>
<dbReference type="PROSITE" id="PS00108">
    <property type="entry name" value="PROTEIN_KINASE_ST"/>
    <property type="match status" value="1"/>
</dbReference>
<feature type="chain" id="PRO_0000351668" description="Probable serine/threonine-protein kinase WNK10">
    <location>
        <begin position="1"/>
        <end position="524"/>
    </location>
</feature>
<feature type="domain" description="Protein kinase" evidence="6">
    <location>
        <begin position="16"/>
        <end position="273"/>
    </location>
</feature>
<feature type="coiled-coil region" evidence="5">
    <location>
        <begin position="480"/>
        <end position="523"/>
    </location>
</feature>
<feature type="active site" description="Proton acceptor" evidence="3">
    <location>
        <position position="163"/>
    </location>
</feature>
<feature type="binding site" evidence="2">
    <location>
        <begin position="96"/>
        <end position="99"/>
    </location>
    <ligand>
        <name>ATP</name>
        <dbReference type="ChEBI" id="CHEBI:30616"/>
    </ligand>
</feature>
<feature type="binding site" evidence="2">
    <location>
        <position position="146"/>
    </location>
    <ligand>
        <name>ATP</name>
        <dbReference type="ChEBI" id="CHEBI:30616"/>
    </ligand>
</feature>
<feature type="modified residue" description="Phosphoserine" evidence="4">
    <location>
        <position position="477"/>
    </location>
</feature>
<evidence type="ECO:0000250" key="1"/>
<evidence type="ECO:0000250" key="2">
    <source>
        <dbReference type="UniProtKB" id="Q9H4A3"/>
    </source>
</evidence>
<evidence type="ECO:0000250" key="3">
    <source>
        <dbReference type="UniProtKB" id="Q9JIH7"/>
    </source>
</evidence>
<evidence type="ECO:0000250" key="4">
    <source>
        <dbReference type="UniProtKB" id="Q9LVL5"/>
    </source>
</evidence>
<evidence type="ECO:0000255" key="5"/>
<evidence type="ECO:0000255" key="6">
    <source>
        <dbReference type="PROSITE-ProRule" id="PRU00159"/>
    </source>
</evidence>
<evidence type="ECO:0000305" key="7"/>
<proteinExistence type="evidence at transcript level"/>
<keyword id="KW-0067">ATP-binding</keyword>
<keyword id="KW-0175">Coiled coil</keyword>
<keyword id="KW-0418">Kinase</keyword>
<keyword id="KW-0547">Nucleotide-binding</keyword>
<keyword id="KW-0597">Phosphoprotein</keyword>
<keyword id="KW-1185">Reference proteome</keyword>
<keyword id="KW-0723">Serine/threonine-protein kinase</keyword>
<keyword id="KW-0808">Transferase</keyword>
<sequence>MEEADFVQKDPTGRYIRYNDVLGRGAFKTVYKAFDEVEGIEVAWNLMSIEDVLQMPGQLDRLYSEVHLLNSLKHDNIIKLFYSWVDDHNKSINMITELFTSGSLTLYRKKHRKVDPKAIMNWARQILKGLHYLHSQTPPVIHRDLKCDNIFVNGNTGKVKIGDLGLAAVMQQPTARSVIGTPEFMAPELYEEEYNELVDIYSFGMCMLEMVTCEYPYRECRNQAQIYKKVTSGIKPQSLSKVDDPQVKQFIEKCLLPAPSRPTALELLKDQLLAVDGAKDSTLTASSNTTFKPAMPPQCEYRPMDVEYKKNTSVSICSSAKSSQECALLQTMEVQRVAESTEFKLSGERRDDVAASMALRIAGSSGQARKVDFDFNLKTDTARAVTGEMVEELDLSSHEVTVIAEMIDELIMKLKANRSLPNANSVYQSKDEEAGESMKSEISADYYHRVSSNEGSRLGCCCEAVESLLSSFLDSCSMVSNKQSEDLKTELNVIESQYNQSCQRLLRMKEEAIEKAKRKWMKLS</sequence>
<accession>Q8RXE5</accession>
<accession>Q9SGV2</accession>
<protein>
    <recommendedName>
        <fullName>Probable serine/threonine-protein kinase WNK10</fullName>
        <shortName>AtWNK10</shortName>
        <ecNumber>2.7.11.1</ecNumber>
    </recommendedName>
    <alternativeName>
        <fullName>Protein kinase with no lysine 10</fullName>
    </alternativeName>
</protein>
<reference key="1">
    <citation type="journal article" date="2000" name="Nature">
        <title>Sequence and analysis of chromosome 1 of the plant Arabidopsis thaliana.</title>
        <authorList>
            <person name="Theologis A."/>
            <person name="Ecker J.R."/>
            <person name="Palm C.J."/>
            <person name="Federspiel N.A."/>
            <person name="Kaul S."/>
            <person name="White O."/>
            <person name="Alonso J."/>
            <person name="Altafi H."/>
            <person name="Araujo R."/>
            <person name="Bowman C.L."/>
            <person name="Brooks S.Y."/>
            <person name="Buehler E."/>
            <person name="Chan A."/>
            <person name="Chao Q."/>
            <person name="Chen H."/>
            <person name="Cheuk R.F."/>
            <person name="Chin C.W."/>
            <person name="Chung M.K."/>
            <person name="Conn L."/>
            <person name="Conway A.B."/>
            <person name="Conway A.R."/>
            <person name="Creasy T.H."/>
            <person name="Dewar K."/>
            <person name="Dunn P."/>
            <person name="Etgu P."/>
            <person name="Feldblyum T.V."/>
            <person name="Feng J.-D."/>
            <person name="Fong B."/>
            <person name="Fujii C.Y."/>
            <person name="Gill J.E."/>
            <person name="Goldsmith A.D."/>
            <person name="Haas B."/>
            <person name="Hansen N.F."/>
            <person name="Hughes B."/>
            <person name="Huizar L."/>
            <person name="Hunter J.L."/>
            <person name="Jenkins J."/>
            <person name="Johnson-Hopson C."/>
            <person name="Khan S."/>
            <person name="Khaykin E."/>
            <person name="Kim C.J."/>
            <person name="Koo H.L."/>
            <person name="Kremenetskaia I."/>
            <person name="Kurtz D.B."/>
            <person name="Kwan A."/>
            <person name="Lam B."/>
            <person name="Langin-Hooper S."/>
            <person name="Lee A."/>
            <person name="Lee J.M."/>
            <person name="Lenz C.A."/>
            <person name="Li J.H."/>
            <person name="Li Y.-P."/>
            <person name="Lin X."/>
            <person name="Liu S.X."/>
            <person name="Liu Z.A."/>
            <person name="Luros J.S."/>
            <person name="Maiti R."/>
            <person name="Marziali A."/>
            <person name="Militscher J."/>
            <person name="Miranda M."/>
            <person name="Nguyen M."/>
            <person name="Nierman W.C."/>
            <person name="Osborne B.I."/>
            <person name="Pai G."/>
            <person name="Peterson J."/>
            <person name="Pham P.K."/>
            <person name="Rizzo M."/>
            <person name="Rooney T."/>
            <person name="Rowley D."/>
            <person name="Sakano H."/>
            <person name="Salzberg S.L."/>
            <person name="Schwartz J.R."/>
            <person name="Shinn P."/>
            <person name="Southwick A.M."/>
            <person name="Sun H."/>
            <person name="Tallon L.J."/>
            <person name="Tambunga G."/>
            <person name="Toriumi M.J."/>
            <person name="Town C.D."/>
            <person name="Utterback T."/>
            <person name="Van Aken S."/>
            <person name="Vaysberg M."/>
            <person name="Vysotskaia V.S."/>
            <person name="Walker M."/>
            <person name="Wu D."/>
            <person name="Yu G."/>
            <person name="Fraser C.M."/>
            <person name="Venter J.C."/>
            <person name="Davis R.W."/>
        </authorList>
    </citation>
    <scope>NUCLEOTIDE SEQUENCE [LARGE SCALE GENOMIC DNA]</scope>
    <source>
        <strain>cv. Columbia</strain>
    </source>
</reference>
<reference key="2">
    <citation type="journal article" date="2017" name="Plant J.">
        <title>Araport11: a complete reannotation of the Arabidopsis thaliana reference genome.</title>
        <authorList>
            <person name="Cheng C.Y."/>
            <person name="Krishnakumar V."/>
            <person name="Chan A.P."/>
            <person name="Thibaud-Nissen F."/>
            <person name="Schobel S."/>
            <person name="Town C.D."/>
        </authorList>
    </citation>
    <scope>GENOME REANNOTATION</scope>
    <source>
        <strain>cv. Columbia</strain>
    </source>
</reference>
<reference key="3">
    <citation type="journal article" date="2003" name="Science">
        <title>Empirical analysis of transcriptional activity in the Arabidopsis genome.</title>
        <authorList>
            <person name="Yamada K."/>
            <person name="Lim J."/>
            <person name="Dale J.M."/>
            <person name="Chen H."/>
            <person name="Shinn P."/>
            <person name="Palm C.J."/>
            <person name="Southwick A.M."/>
            <person name="Wu H.C."/>
            <person name="Kim C.J."/>
            <person name="Nguyen M."/>
            <person name="Pham P.K."/>
            <person name="Cheuk R.F."/>
            <person name="Karlin-Newmann G."/>
            <person name="Liu S.X."/>
            <person name="Lam B."/>
            <person name="Sakano H."/>
            <person name="Wu T."/>
            <person name="Yu G."/>
            <person name="Miranda M."/>
            <person name="Quach H.L."/>
            <person name="Tripp M."/>
            <person name="Chang C.H."/>
            <person name="Lee J.M."/>
            <person name="Toriumi M.J."/>
            <person name="Chan M.M."/>
            <person name="Tang C.C."/>
            <person name="Onodera C.S."/>
            <person name="Deng J.M."/>
            <person name="Akiyama K."/>
            <person name="Ansari Y."/>
            <person name="Arakawa T."/>
            <person name="Banh J."/>
            <person name="Banno F."/>
            <person name="Bowser L."/>
            <person name="Brooks S.Y."/>
            <person name="Carninci P."/>
            <person name="Chao Q."/>
            <person name="Choy N."/>
            <person name="Enju A."/>
            <person name="Goldsmith A.D."/>
            <person name="Gurjal M."/>
            <person name="Hansen N.F."/>
            <person name="Hayashizaki Y."/>
            <person name="Johnson-Hopson C."/>
            <person name="Hsuan V.W."/>
            <person name="Iida K."/>
            <person name="Karnes M."/>
            <person name="Khan S."/>
            <person name="Koesema E."/>
            <person name="Ishida J."/>
            <person name="Jiang P.X."/>
            <person name="Jones T."/>
            <person name="Kawai J."/>
            <person name="Kamiya A."/>
            <person name="Meyers C."/>
            <person name="Nakajima M."/>
            <person name="Narusaka M."/>
            <person name="Seki M."/>
            <person name="Sakurai T."/>
            <person name="Satou M."/>
            <person name="Tamse R."/>
            <person name="Vaysberg M."/>
            <person name="Wallender E.K."/>
            <person name="Wong C."/>
            <person name="Yamamura Y."/>
            <person name="Yuan S."/>
            <person name="Shinozaki K."/>
            <person name="Davis R.W."/>
            <person name="Theologis A."/>
            <person name="Ecker J.R."/>
        </authorList>
    </citation>
    <scope>NUCLEOTIDE SEQUENCE [LARGE SCALE MRNA]</scope>
    <source>
        <strain>cv. Columbia</strain>
    </source>
</reference>
<name>WNK10_ARATH</name>